<proteinExistence type="evidence at transcript level"/>
<evidence type="ECO:0000250" key="1">
    <source>
        <dbReference type="UniProtKB" id="P00396"/>
    </source>
</evidence>
<evidence type="ECO:0000250" key="2">
    <source>
        <dbReference type="UniProtKB" id="P00401"/>
    </source>
</evidence>
<evidence type="ECO:0000255" key="3"/>
<evidence type="ECO:0000269" key="4">
    <source>
    </source>
</evidence>
<evidence type="ECO:0000305" key="5"/>
<name>COX1_DROME</name>
<protein>
    <recommendedName>
        <fullName>Cytochrome c oxidase subunit 1</fullName>
        <ecNumber>7.1.1.9</ecNumber>
    </recommendedName>
    <alternativeName>
        <fullName>Cytochrome c oxidase polypeptide I</fullName>
    </alternativeName>
</protein>
<keyword id="KW-0106">Calcium</keyword>
<keyword id="KW-0186">Copper</keyword>
<keyword id="KW-0249">Electron transport</keyword>
<keyword id="KW-0349">Heme</keyword>
<keyword id="KW-0408">Iron</keyword>
<keyword id="KW-0460">Magnesium</keyword>
<keyword id="KW-0472">Membrane</keyword>
<keyword id="KW-0479">Metal-binding</keyword>
<keyword id="KW-0496">Mitochondrion</keyword>
<keyword id="KW-0999">Mitochondrion inner membrane</keyword>
<keyword id="KW-1185">Reference proteome</keyword>
<keyword id="KW-0679">Respiratory chain</keyword>
<keyword id="KW-1278">Translocase</keyword>
<keyword id="KW-0812">Transmembrane</keyword>
<keyword id="KW-1133">Transmembrane helix</keyword>
<keyword id="KW-0813">Transport</keyword>
<organism>
    <name type="scientific">Drosophila melanogaster</name>
    <name type="common">Fruit fly</name>
    <dbReference type="NCBI Taxonomy" id="7227"/>
    <lineage>
        <taxon>Eukaryota</taxon>
        <taxon>Metazoa</taxon>
        <taxon>Ecdysozoa</taxon>
        <taxon>Arthropoda</taxon>
        <taxon>Hexapoda</taxon>
        <taxon>Insecta</taxon>
        <taxon>Pterygota</taxon>
        <taxon>Neoptera</taxon>
        <taxon>Endopterygota</taxon>
        <taxon>Diptera</taxon>
        <taxon>Brachycera</taxon>
        <taxon>Muscomorpha</taxon>
        <taxon>Ephydroidea</taxon>
        <taxon>Drosophilidae</taxon>
        <taxon>Drosophila</taxon>
        <taxon>Sophophora</taxon>
    </lineage>
</organism>
<feature type="chain" id="PRO_0000183325" description="Cytochrome c oxidase subunit 1">
    <location>
        <begin position="1"/>
        <end position="511"/>
    </location>
</feature>
<feature type="transmembrane region" description="Helical" evidence="3">
    <location>
        <begin position="15"/>
        <end position="35"/>
    </location>
</feature>
<feature type="transmembrane region" description="Helical" evidence="3">
    <location>
        <begin position="54"/>
        <end position="74"/>
    </location>
</feature>
<feature type="transmembrane region" description="Helical" evidence="3">
    <location>
        <begin position="100"/>
        <end position="120"/>
    </location>
</feature>
<feature type="transmembrane region" description="Helical" evidence="3">
    <location>
        <begin position="143"/>
        <end position="163"/>
    </location>
</feature>
<feature type="transmembrane region" description="Helical" evidence="3">
    <location>
        <begin position="181"/>
        <end position="201"/>
    </location>
</feature>
<feature type="transmembrane region" description="Helical" evidence="3">
    <location>
        <begin position="232"/>
        <end position="252"/>
    </location>
</feature>
<feature type="transmembrane region" description="Helical" evidence="3">
    <location>
        <begin position="266"/>
        <end position="286"/>
    </location>
</feature>
<feature type="transmembrane region" description="Helical" evidence="3">
    <location>
        <begin position="303"/>
        <end position="323"/>
    </location>
</feature>
<feature type="transmembrane region" description="Helical" evidence="3">
    <location>
        <begin position="336"/>
        <end position="356"/>
    </location>
</feature>
<feature type="transmembrane region" description="Helical" evidence="3">
    <location>
        <begin position="378"/>
        <end position="398"/>
    </location>
</feature>
<feature type="transmembrane region" description="Helical" evidence="3">
    <location>
        <begin position="412"/>
        <end position="432"/>
    </location>
</feature>
<feature type="transmembrane region" description="Helical" evidence="3">
    <location>
        <begin position="450"/>
        <end position="470"/>
    </location>
</feature>
<feature type="binding site" evidence="2">
    <location>
        <position position="38"/>
    </location>
    <ligand>
        <name>Ca(2+)</name>
        <dbReference type="ChEBI" id="CHEBI:29108"/>
    </ligand>
</feature>
<feature type="binding site" evidence="2">
    <location>
        <position position="43"/>
    </location>
    <ligand>
        <name>Ca(2+)</name>
        <dbReference type="ChEBI" id="CHEBI:29108"/>
    </ligand>
</feature>
<feature type="binding site" description="axial binding residue" evidence="2">
    <location>
        <position position="59"/>
    </location>
    <ligand>
        <name>Fe(II)-heme a</name>
        <dbReference type="ChEBI" id="CHEBI:61715"/>
        <note>low-spin</note>
    </ligand>
    <ligandPart>
        <name>Fe</name>
        <dbReference type="ChEBI" id="CHEBI:18248"/>
    </ligandPart>
</feature>
<feature type="binding site" evidence="2">
    <location>
        <position position="238"/>
    </location>
    <ligand>
        <name>Cu cation</name>
        <dbReference type="ChEBI" id="CHEBI:23378"/>
        <label>B</label>
    </ligand>
</feature>
<feature type="binding site" evidence="1">
    <location>
        <position position="242"/>
    </location>
    <ligand>
        <name>O2</name>
        <dbReference type="ChEBI" id="CHEBI:15379"/>
    </ligand>
</feature>
<feature type="binding site" evidence="2">
    <location>
        <position position="288"/>
    </location>
    <ligand>
        <name>Cu cation</name>
        <dbReference type="ChEBI" id="CHEBI:23378"/>
        <label>B</label>
    </ligand>
</feature>
<feature type="binding site" evidence="2">
    <location>
        <position position="289"/>
    </location>
    <ligand>
        <name>Cu cation</name>
        <dbReference type="ChEBI" id="CHEBI:23378"/>
        <label>B</label>
    </ligand>
</feature>
<feature type="binding site" evidence="2">
    <location>
        <position position="366"/>
    </location>
    <ligand>
        <name>Mg(2+)</name>
        <dbReference type="ChEBI" id="CHEBI:18420"/>
        <note>ligand shared with subunit 2</note>
    </ligand>
</feature>
<feature type="binding site" evidence="2">
    <location>
        <position position="367"/>
    </location>
    <ligand>
        <name>Mg(2+)</name>
        <dbReference type="ChEBI" id="CHEBI:18420"/>
        <note>ligand shared with subunit 2</note>
    </ligand>
</feature>
<feature type="binding site" description="axial binding residue" evidence="2">
    <location>
        <position position="374"/>
    </location>
    <ligand>
        <name>heme a3</name>
        <dbReference type="ChEBI" id="CHEBI:83282"/>
        <note>high-spin</note>
    </ligand>
    <ligandPart>
        <name>Fe</name>
        <dbReference type="ChEBI" id="CHEBI:18248"/>
    </ligandPart>
</feature>
<feature type="binding site" description="axial binding residue" evidence="2">
    <location>
        <position position="376"/>
    </location>
    <ligand>
        <name>Fe(II)-heme a</name>
        <dbReference type="ChEBI" id="CHEBI:61715"/>
        <note>low-spin</note>
    </ligand>
    <ligandPart>
        <name>Fe</name>
        <dbReference type="ChEBI" id="CHEBI:18248"/>
    </ligandPart>
</feature>
<feature type="cross-link" description="1'-histidyl-3'-tyrosine (His-Tyr)" evidence="2">
    <location>
        <begin position="238"/>
        <end position="242"/>
    </location>
</feature>
<feature type="sequence variant" description="In strain: Zimbabwe." evidence="4">
    <original>Y</original>
    <variation>F</variation>
    <location>
        <position position="127"/>
    </location>
</feature>
<dbReference type="EC" id="7.1.1.9"/>
<dbReference type="EMBL" id="J01404">
    <property type="protein sequence ID" value="AAB59239.1"/>
    <property type="molecule type" value="Genomic_DNA"/>
</dbReference>
<dbReference type="EMBL" id="U37541">
    <property type="protein sequence ID" value="AAC47812.2"/>
    <property type="molecule type" value="Genomic_DNA"/>
</dbReference>
<dbReference type="EMBL" id="AF200828">
    <property type="protein sequence ID" value="AAF77227.1"/>
    <property type="molecule type" value="Genomic_DNA"/>
</dbReference>
<dbReference type="EMBL" id="AF200829">
    <property type="protein sequence ID" value="AAF77245.1"/>
    <property type="molecule type" value="Genomic_DNA"/>
</dbReference>
<dbReference type="EMBL" id="AJ400907">
    <property type="protein sequence ID" value="CAB91052.2"/>
    <property type="molecule type" value="Genomic_DNA"/>
</dbReference>
<dbReference type="EMBL" id="FJ190105">
    <property type="protein sequence ID" value="ACI28543.1"/>
    <property type="molecule type" value="Genomic_DNA"/>
</dbReference>
<dbReference type="EMBL" id="FJ190106">
    <property type="protein sequence ID" value="ACI28556.1"/>
    <property type="molecule type" value="Genomic_DNA"/>
</dbReference>
<dbReference type="EMBL" id="FJ190107">
    <property type="protein sequence ID" value="ACI28569.1"/>
    <property type="molecule type" value="Genomic_DNA"/>
</dbReference>
<dbReference type="EMBL" id="FJ190108">
    <property type="protein sequence ID" value="ACI28582.1"/>
    <property type="molecule type" value="Genomic_DNA"/>
</dbReference>
<dbReference type="EMBL" id="FJ190109">
    <property type="protein sequence ID" value="ACI28595.1"/>
    <property type="molecule type" value="Genomic_DNA"/>
</dbReference>
<dbReference type="EMBL" id="FJ190110">
    <property type="protein sequence ID" value="ACI28608.1"/>
    <property type="molecule type" value="Genomic_DNA"/>
</dbReference>
<dbReference type="EMBL" id="GQ229519">
    <property type="protein sequence ID" value="ACT21544.1"/>
    <property type="molecule type" value="mRNA"/>
</dbReference>
<dbReference type="EMBL" id="JX266575">
    <property type="protein sequence ID" value="AFR59645.1"/>
    <property type="molecule type" value="Genomic_DNA"/>
</dbReference>
<dbReference type="EMBL" id="JX266576">
    <property type="protein sequence ID" value="AFR59658.1"/>
    <property type="molecule type" value="Genomic_DNA"/>
</dbReference>
<dbReference type="EMBL" id="JX266577">
    <property type="protein sequence ID" value="AFR59671.1"/>
    <property type="molecule type" value="Genomic_DNA"/>
</dbReference>
<dbReference type="EMBL" id="JX266578">
    <property type="protein sequence ID" value="AFR59684.1"/>
    <property type="molecule type" value="Genomic_DNA"/>
</dbReference>
<dbReference type="EMBL" id="JX266579">
    <property type="protein sequence ID" value="AFR59697.1"/>
    <property type="molecule type" value="Genomic_DNA"/>
</dbReference>
<dbReference type="EMBL" id="JX266580">
    <property type="protein sequence ID" value="AFR59710.1"/>
    <property type="molecule type" value="Genomic_DNA"/>
</dbReference>
<dbReference type="EMBL" id="JQ686694">
    <property type="protein sequence ID" value="AFP47060.1"/>
    <property type="molecule type" value="Genomic_DNA"/>
</dbReference>
<dbReference type="EMBL" id="JQ686695">
    <property type="protein sequence ID" value="AFP47073.1"/>
    <property type="molecule type" value="Genomic_DNA"/>
</dbReference>
<dbReference type="EMBL" id="JQ686696">
    <property type="protein sequence ID" value="AFP47086.1"/>
    <property type="molecule type" value="Genomic_DNA"/>
</dbReference>
<dbReference type="EMBL" id="JQ686698">
    <property type="protein sequence ID" value="AFP47112.1"/>
    <property type="molecule type" value="Genomic_DNA"/>
</dbReference>
<dbReference type="EMBL" id="JQ686699">
    <property type="protein sequence ID" value="AFP47125.1"/>
    <property type="molecule type" value="Genomic_DNA"/>
</dbReference>
<dbReference type="EMBL" id="KJ947872">
    <property type="protein sequence ID" value="AIC64005.1"/>
    <property type="molecule type" value="Genomic_DNA"/>
</dbReference>
<dbReference type="EMBL" id="M57910">
    <property type="protein sequence ID" value="AAB02282.1"/>
    <property type="molecule type" value="Genomic_DNA"/>
</dbReference>
<dbReference type="EMBL" id="M18022">
    <property type="protein sequence ID" value="AAA65480.2"/>
    <property type="molecule type" value="Genomic_DNA"/>
</dbReference>
<dbReference type="EMBL" id="AY383542">
    <property type="protein sequence ID" value="AAQ92343.1"/>
    <property type="molecule type" value="Genomic_DNA"/>
</dbReference>
<dbReference type="EMBL" id="U51619">
    <property type="protein sequence ID" value="AAB68481.2"/>
    <property type="molecule type" value="Genomic_DNA"/>
</dbReference>
<dbReference type="PIR" id="A93307">
    <property type="entry name" value="ODFF1"/>
</dbReference>
<dbReference type="RefSeq" id="YP_009047267.1">
    <property type="nucleotide sequence ID" value="NC_024511.2"/>
</dbReference>
<dbReference type="SMR" id="P00399"/>
<dbReference type="BioGRID" id="2595062">
    <property type="interactions" value="1"/>
</dbReference>
<dbReference type="ComplexPortal" id="CPX-8620">
    <property type="entry name" value="Mitochondrial respiratory chain complex IV"/>
</dbReference>
<dbReference type="ComplexPortal" id="CPX-8621">
    <property type="entry name" value="Mitochondrial respiratory chain complex IV, testis-specific variant"/>
</dbReference>
<dbReference type="FunCoup" id="P00399">
    <property type="interactions" value="148"/>
</dbReference>
<dbReference type="STRING" id="7227.FBpp0100176"/>
<dbReference type="PaxDb" id="7227-FBpp0100176"/>
<dbReference type="EnsemblMetazoa" id="FBtr0100861">
    <property type="protein sequence ID" value="FBpp0100176"/>
    <property type="gene ID" value="FBgn0013674"/>
</dbReference>
<dbReference type="GeneID" id="19893533"/>
<dbReference type="KEGG" id="dme:Dmel_CG34067"/>
<dbReference type="AGR" id="FB:FBgn0013674"/>
<dbReference type="CTD" id="4512"/>
<dbReference type="FlyBase" id="FBgn0013674">
    <property type="gene designation" value="mt:CoI"/>
</dbReference>
<dbReference type="VEuPathDB" id="VectorBase:FBgn0013674"/>
<dbReference type="eggNOG" id="KOG4769">
    <property type="taxonomic scope" value="Eukaryota"/>
</dbReference>
<dbReference type="GeneTree" id="ENSGT00390000001518"/>
<dbReference type="HOGENOM" id="CLU_011899_7_3_1"/>
<dbReference type="InParanoid" id="P00399"/>
<dbReference type="OMA" id="WAMMSIG"/>
<dbReference type="OrthoDB" id="10002679at2759"/>
<dbReference type="PhylomeDB" id="P00399"/>
<dbReference type="Reactome" id="R-DME-5628897">
    <property type="pathway name" value="TP53 Regulates Metabolic Genes"/>
</dbReference>
<dbReference type="Reactome" id="R-DME-611105">
    <property type="pathway name" value="Respiratory electron transport"/>
</dbReference>
<dbReference type="Reactome" id="R-DME-9707564">
    <property type="pathway name" value="Cytoprotection by HMOX1"/>
</dbReference>
<dbReference type="Reactome" id="R-DME-9837999">
    <property type="pathway name" value="Mitochondrial protein degradation"/>
</dbReference>
<dbReference type="Reactome" id="R-DME-9864848">
    <property type="pathway name" value="Complex IV assembly"/>
</dbReference>
<dbReference type="UniPathway" id="UPA00705"/>
<dbReference type="BioGRID-ORCS" id="19893533">
    <property type="hits" value="0 hits in 1 CRISPR screen"/>
</dbReference>
<dbReference type="ChiTaRS" id="COX1">
    <property type="organism name" value="fly"/>
</dbReference>
<dbReference type="GenomeRNAi" id="19893533"/>
<dbReference type="PRO" id="PR:P00399"/>
<dbReference type="Proteomes" id="UP000000803">
    <property type="component" value="Mitochondrion"/>
</dbReference>
<dbReference type="Bgee" id="FBgn0013674">
    <property type="expression patterns" value="Expressed in adult anterior midgut class I enteroendocrine cell in adult midgut (Drosophila) and 275 other cell types or tissues"/>
</dbReference>
<dbReference type="ExpressionAtlas" id="P00399">
    <property type="expression patterns" value="baseline and differential"/>
</dbReference>
<dbReference type="GO" id="GO:0005743">
    <property type="term" value="C:mitochondrial inner membrane"/>
    <property type="evidence" value="ECO:0000314"/>
    <property type="project" value="FlyBase"/>
</dbReference>
<dbReference type="GO" id="GO:0045277">
    <property type="term" value="C:respiratory chain complex IV"/>
    <property type="evidence" value="ECO:0000314"/>
    <property type="project" value="FlyBase"/>
</dbReference>
<dbReference type="GO" id="GO:0004129">
    <property type="term" value="F:cytochrome-c oxidase activity"/>
    <property type="evidence" value="ECO:0000315"/>
    <property type="project" value="FlyBase"/>
</dbReference>
<dbReference type="GO" id="GO:0020037">
    <property type="term" value="F:heme binding"/>
    <property type="evidence" value="ECO:0007669"/>
    <property type="project" value="InterPro"/>
</dbReference>
<dbReference type="GO" id="GO:0046872">
    <property type="term" value="F:metal ion binding"/>
    <property type="evidence" value="ECO:0007669"/>
    <property type="project" value="UniProtKB-KW"/>
</dbReference>
<dbReference type="GO" id="GO:0009060">
    <property type="term" value="P:aerobic respiration"/>
    <property type="evidence" value="ECO:0000318"/>
    <property type="project" value="GO_Central"/>
</dbReference>
<dbReference type="GO" id="GO:0006123">
    <property type="term" value="P:mitochondrial electron transport, cytochrome c to oxygen"/>
    <property type="evidence" value="ECO:0000315"/>
    <property type="project" value="FlyBase"/>
</dbReference>
<dbReference type="GO" id="GO:0022904">
    <property type="term" value="P:respiratory electron transport chain"/>
    <property type="evidence" value="ECO:0000318"/>
    <property type="project" value="GO_Central"/>
</dbReference>
<dbReference type="CDD" id="cd01663">
    <property type="entry name" value="Cyt_c_Oxidase_I"/>
    <property type="match status" value="1"/>
</dbReference>
<dbReference type="FunFam" id="1.20.210.10:FF:000001">
    <property type="entry name" value="Cytochrome c oxidase subunit 1"/>
    <property type="match status" value="1"/>
</dbReference>
<dbReference type="Gene3D" id="1.20.210.10">
    <property type="entry name" value="Cytochrome c oxidase-like, subunit I domain"/>
    <property type="match status" value="1"/>
</dbReference>
<dbReference type="InterPro" id="IPR023616">
    <property type="entry name" value="Cyt_c_oxase-like_su1_dom"/>
</dbReference>
<dbReference type="InterPro" id="IPR036927">
    <property type="entry name" value="Cyt_c_oxase-like_su1_sf"/>
</dbReference>
<dbReference type="InterPro" id="IPR000883">
    <property type="entry name" value="Cyt_C_Oxase_1"/>
</dbReference>
<dbReference type="InterPro" id="IPR023615">
    <property type="entry name" value="Cyt_c_Oxase_su1_BS"/>
</dbReference>
<dbReference type="InterPro" id="IPR033944">
    <property type="entry name" value="Cyt_c_oxase_su1_dom"/>
</dbReference>
<dbReference type="PANTHER" id="PTHR10422">
    <property type="entry name" value="CYTOCHROME C OXIDASE SUBUNIT 1"/>
    <property type="match status" value="1"/>
</dbReference>
<dbReference type="PANTHER" id="PTHR10422:SF18">
    <property type="entry name" value="CYTOCHROME C OXIDASE SUBUNIT 1"/>
    <property type="match status" value="1"/>
</dbReference>
<dbReference type="Pfam" id="PF00115">
    <property type="entry name" value="COX1"/>
    <property type="match status" value="1"/>
</dbReference>
<dbReference type="PRINTS" id="PR01165">
    <property type="entry name" value="CYCOXIDASEI"/>
</dbReference>
<dbReference type="SUPFAM" id="SSF81442">
    <property type="entry name" value="Cytochrome c oxidase subunit I-like"/>
    <property type="match status" value="1"/>
</dbReference>
<dbReference type="PROSITE" id="PS50855">
    <property type="entry name" value="COX1"/>
    <property type="match status" value="1"/>
</dbReference>
<dbReference type="PROSITE" id="PS00077">
    <property type="entry name" value="COX1_CUB"/>
    <property type="match status" value="1"/>
</dbReference>
<reference key="1">
    <citation type="journal article" date="1983" name="Nature">
        <title>Drosophila melanogaster mitochondrial DNA, a novel organization and genetic code.</title>
        <authorList>
            <person name="de Bruijn M.H.L."/>
        </authorList>
    </citation>
    <scope>NUCLEOTIDE SEQUENCE [GENOMIC DNA]</scope>
</reference>
<reference key="2">
    <citation type="journal article" date="1995" name="Insect Mol. Biol.">
        <title>Drosophila melanogaster mitochondrial DNA: completion of the nucleotide sequence and evolutionary comparisons.</title>
        <authorList>
            <person name="Lewis D.L."/>
            <person name="Farr C.L."/>
            <person name="Kaguni L.S."/>
        </authorList>
    </citation>
    <scope>NUCLEOTIDE SEQUENCE [LARGE SCALE GENOMIC DNA]</scope>
</reference>
<reference key="3">
    <citation type="journal article" date="2000" name="J. Mol. Evol.">
        <title>Comparative genomics of mitochondrial DNA in members of the Drosophila melanogaster subgroup.</title>
        <authorList>
            <person name="Ballard J.W.O."/>
        </authorList>
    </citation>
    <scope>NUCLEOTIDE SEQUENCE [GENOMIC DNA]</scope>
    <scope>VARIANT PHE-127</scope>
    <source>
        <strain>Oregon-R</strain>
        <strain>Zimbabwe</strain>
    </source>
</reference>
<reference key="4">
    <citation type="journal article" date="2001" name="Heredity">
        <title>I-R system of hybrid dysgenesis in Drosophila melanogaster: analysis of the mitochondrial DNA in reactive strains exhibiting different potentials for I factor transposition.</title>
        <authorList>
            <person name="Azou Y."/>
            <person name="Bregliano J.C."/>
        </authorList>
    </citation>
    <scope>NUCLEOTIDE SEQUENCE [GENOMIC DNA]</scope>
    <source>
        <strain>Paris</strain>
    </source>
</reference>
<reference key="5">
    <citation type="journal article" date="2008" name="Aging Cell">
        <title>Variation in mitochondrial genotype has substantial lifespan effects which may be modulated by nuclear background.</title>
        <authorList>
            <person name="Clancy D.J."/>
        </authorList>
    </citation>
    <scope>NUCLEOTIDE SEQUENCE [GENOMIC DNA]</scope>
    <source>
        <strain>Alstonville</strain>
        <strain>Brownsville</strain>
        <strain>Dahomey</strain>
        <strain>Japan</strain>
        <strain>Mysore</strain>
        <strain>W1118</strain>
    </source>
</reference>
<reference key="6">
    <citation type="journal article" date="2009" name="Gene">
        <title>Characterization of mature mitochondrial transcripts in Drosophila, and the implications for the tRNA punctuation model in arthropods.</title>
        <authorList>
            <person name="Stewart J.B."/>
            <person name="Beckenbach A.T."/>
        </authorList>
    </citation>
    <scope>NUCLEOTIDE SEQUENCE [MRNA]</scope>
    <scope>IDENTIFICATION OF PROBABLE INITIATION SITE</scope>
    <source>
        <strain>Oregon-R</strain>
    </source>
</reference>
<reference key="7">
    <citation type="journal article" date="2012" name="Curr. Biol.">
        <title>Mitochondria, maternal inheritance, and male aging.</title>
        <authorList>
            <person name="Camus M.F."/>
            <person name="Clancy D.J."/>
            <person name="Dowling D.K."/>
        </authorList>
    </citation>
    <scope>NUCLEOTIDE SEQUENCE [GENOMIC DNA]</scope>
    <source>
        <strain>Barcelona</strain>
        <strain>Hawaii</strain>
        <strain>Israel</strain>
        <strain>Madang</strain>
        <strain>Puerto Montt</strain>
        <strain>Sweden</strain>
    </source>
</reference>
<reference key="8">
    <citation type="journal article" date="2012" name="Genetics">
        <title>A cytoplasmic suppressor of a nuclear mutation affecting mitochondrial functions in Drosophila.</title>
        <authorList>
            <person name="Chen S."/>
            <person name="Oliveira M.T."/>
            <person name="Sanz A."/>
            <person name="Kemppainen E."/>
            <person name="Fukuoh A."/>
            <person name="Schlicht B."/>
            <person name="Kaguni L.S."/>
            <person name="Jacobs H.T."/>
        </authorList>
    </citation>
    <scope>NUCLEOTIDE SEQUENCE [GENOMIC DNA]</scope>
    <source>
        <strain>BER1</strain>
        <strain>Canton-S</strain>
        <strain>CO3</strain>
        <strain>Oregon-RC</strain>
        <strain>QI2</strain>
    </source>
</reference>
<reference key="9">
    <citation type="submission" date="2014-08" db="EMBL/GenBank/DDBJ databases">
        <authorList>
            <person name="Wan K."/>
            <person name="Celniker S."/>
        </authorList>
    </citation>
    <scope>NUCLEOTIDE SEQUENCE [LARGE SCALE GENOMIC DNA]</scope>
    <source>
        <strain>Berkeley</strain>
    </source>
</reference>
<reference key="10">
    <citation type="journal article" date="1990" name="Proc. Natl. Acad. Sci. U.S.A.">
        <title>Evolution of Drosophila mitochondrial DNA and the history of the melanogaster subgroup.</title>
        <authorList>
            <person name="Satta Y."/>
            <person name="Takahata N."/>
        </authorList>
    </citation>
    <scope>NUCLEOTIDE SEQUENCE [GENOMIC DNA] OF 1-498</scope>
    <source>
        <strain>SP1</strain>
    </source>
</reference>
<reference key="11">
    <citation type="journal article" date="1987" name="Mol. Biol. Evol.">
        <title>Analysis of nucleotide substitutions of mitochondrial DNAs in Drosophila melanogaster and its sibling species.</title>
        <authorList>
            <person name="Satta Y."/>
            <person name="Ishiwa H."/>
            <person name="Chigusa S.I."/>
        </authorList>
    </citation>
    <scope>NUCLEOTIDE SEQUENCE [GENOMIC DNA] OF 1-102</scope>
</reference>
<reference key="12">
    <citation type="journal article" date="2009" name="J. Mol. Evol.">
        <title>Comparative genomics of Drosophila mtDNA: Novel features of conservation and change across functional domains and lineages.</title>
        <authorList>
            <person name="Montooth K.L."/>
            <person name="Abt D.N."/>
            <person name="Hofmann J.W."/>
            <person name="Rand D.M."/>
        </authorList>
    </citation>
    <scope>NUCLEOTIDE SEQUENCE [MRNA] OF 1-10</scope>
    <scope>IDENTIFICATION OF PROBABLE INITIATION SITE</scope>
</reference>
<reference key="13">
    <citation type="journal article" date="2003" name="Mol. Ecol.">
        <title>Collembola as alternative prey sustaining spiders in arable ecosystems: prey detection within predators using molecular markers.</title>
        <authorList>
            <person name="Agusti N."/>
            <person name="Shayler S.P."/>
            <person name="Harwood J.D."/>
            <person name="Vaughan I.P."/>
            <person name="Sunderland K.D."/>
            <person name="Symondson W.O."/>
        </authorList>
    </citation>
    <scope>NUCLEOTIDE SEQUENCE [GENOMIC DNA] OF 74-248</scope>
</reference>
<reference key="14">
    <citation type="journal article" date="1997" name="Evolution">
        <title>Mitochondrial DNA phylogenies for the Drosophila obscura group.</title>
        <authorList>
            <person name="Gleason J.M."/>
            <person name="Caccone A."/>
            <person name="Moriyama E.N."/>
            <person name="White K.P."/>
            <person name="Powell J.R."/>
        </authorList>
        <dbReference type="AGRICOLA" id="IND20580636"/>
    </citation>
    <scope>NUCLEOTIDE SEQUENCE [GENOMIC DNA] OF 231-390</scope>
    <source>
        <strain>Australia 13</strain>
    </source>
</reference>
<geneLocation type="mitochondrion"/>
<sequence length="511" mass="56372">SRQWLFSTNHKDIGTLYFIFGAWAGMVGTSLSILIRAELGHPGALIGDDQIYNVIVTAHAFIMIFFMVMPIMIGGFGNWLVPLMLGAPDMAFPRMNNMSFWLLPPALSLLLVSSMVENGAGTGWTVYPPLSAGIAHGGASVDLAIFSLHLAGISSILGAVNFITTVINMRSTGISLDRMPLFVWSVVITALLLLLSLPVLAGAITMLLTDRNLNTSFFDPAGGGDPILYQHLFWFFGHPEVYILILPGFGMISHIISQESGKKETFGSLGMIYAMLAIGLLGFIVWAHHMFTVGMDVDTRAYFTSATMIIAVPTGIKIFSWLATLHGTQLSYSPAILWALGFVFLFTVGGLTGVVLANSSVDIILHDTYYVVAHFHYVLSMGAVFAIMAGFIHWYPLFTGLTLNNKWLKSHFIIMFIGVNLTFFPQHFLGLAGMPRRYSDYPDAYTTWNIVSTIGSTISLLGILFFFFIIWESLVSQRQVIYPIQLNSSIEWYQNTPPAEHSYSELPLLTN</sequence>
<accession>P00399</accession>
<accession>B6E0P3</accession>
<accession>O21461</accession>
<accession>Q34349</accession>
<accession>Q6TXT7</accession>
<accession>Q7GFY7</accession>
<accession>Q7GHI7</accession>
<accession>Q9MGN6</accession>
<gene>
    <name type="primary">mt:CoI</name>
    <name type="synonym">CoI</name>
</gene>
<comment type="function">
    <text evidence="2">Component of the cytochrome c oxidase, the last enzyme in the mitochondrial electron transport chain which drives oxidative phosphorylation. The respiratory chain contains 3 multisubunit complexes succinate dehydrogenase (complex II, CII), ubiquinol-cytochrome c oxidoreductase (cytochrome b-c1 complex, complex III, CIII) and cytochrome c oxidase (complex IV, CIV), that cooperate to transfer electrons derived from NADH and succinate to molecular oxygen, creating an electrochemical gradient over the inner membrane that drives transmembrane transport and the ATP synthase. Cytochrome c oxidase is the component of the respiratory chain that catalyzes the reduction of oxygen to water. Electrons originating from reduced cytochrome c in the intermembrane space (IMS) are transferred via the dinuclear copper A center (CU(A)) of subunit 2 and heme A of subunit 1 to the active site in subunit 1, a binuclear center (BNC) formed by heme A3 and copper B (CU(B)). The BNC reduces molecular oxygen to 2 water molecules using 4 electrons from cytochrome c in the IMS and 4 protons from the mitochondrial matrix.</text>
</comment>
<comment type="catalytic activity">
    <reaction evidence="2">
        <text>4 Fe(II)-[cytochrome c] + O2 + 8 H(+)(in) = 4 Fe(III)-[cytochrome c] + 2 H2O + 4 H(+)(out)</text>
        <dbReference type="Rhea" id="RHEA:11436"/>
        <dbReference type="Rhea" id="RHEA-COMP:10350"/>
        <dbReference type="Rhea" id="RHEA-COMP:14399"/>
        <dbReference type="ChEBI" id="CHEBI:15377"/>
        <dbReference type="ChEBI" id="CHEBI:15378"/>
        <dbReference type="ChEBI" id="CHEBI:15379"/>
        <dbReference type="ChEBI" id="CHEBI:29033"/>
        <dbReference type="ChEBI" id="CHEBI:29034"/>
        <dbReference type="EC" id="7.1.1.9"/>
    </reaction>
    <physiologicalReaction direction="left-to-right" evidence="2">
        <dbReference type="Rhea" id="RHEA:11437"/>
    </physiologicalReaction>
</comment>
<comment type="cofactor">
    <cofactor evidence="2">
        <name>heme</name>
        <dbReference type="ChEBI" id="CHEBI:30413"/>
    </cofactor>
    <text evidence="2">Binds 2 heme A groups non-covalently per subunit.</text>
</comment>
<comment type="cofactor">
    <cofactor evidence="2">
        <name>Cu cation</name>
        <dbReference type="ChEBI" id="CHEBI:23378"/>
    </cofactor>
    <text evidence="2">Binds a copper B center.</text>
</comment>
<comment type="pathway">
    <text evidence="2">Energy metabolism; oxidative phosphorylation.</text>
</comment>
<comment type="subunit">
    <text evidence="2">Component of the cytochrome c oxidase (complex IV, CIV), a multisubunit enzyme composed of a catalytic core of 3 subunits and several supernumerary subunits. The complex exists as a monomer or a dimer and forms supercomplexes (SCs) in the inner mitochondrial membrane with ubiquinol-cytochrome c oxidoreductase (cytochrome b-c1 complex, complex III, CIII).</text>
</comment>
<comment type="subcellular location">
    <subcellularLocation>
        <location evidence="2">Mitochondrion inner membrane</location>
        <topology evidence="2">Multi-pass membrane protein</topology>
    </subcellularLocation>
</comment>
<comment type="similarity">
    <text evidence="5">Belongs to the heme-copper respiratory oxidase family.</text>
</comment>
<comment type="caution">
    <text evidence="5">There is no mitochondrial-type translation initiation codon present in frame in the sequence. In PubMed:19533212, the authors suggest the presence of a novel start codon coding for either Pro or Ser in Drosophila CoI transcripts. In PubMed:19540318, further evidence for the presence of the same start codon coding for Ser in D.melanogaster CoI transcript is presented.</text>
</comment>